<sequence>MTLRNDWTREEIQALYEQPFLDLVFKAQQVHREHFTANTIQVSTLLSIKTGKCPEDCKYCSQSAHYDSKLEAEKRIAVEKVISEAKAAKDSGSSRFCMGAAWRNPHERDMPYVLEMVREVKALGMETCMTLGMLNQSQAERLKDAGLDYYNHNLDTSREYYSHIISTRTFDDRLNTLDYVRQAGMKVCSGGIVGLGESREDRIGLLHELATLPIHPESVPINMLVPIEGTPLADVEKLDVIEWIRTIAVARIIMPHSYIRLSAGRESLSDSDQALAFMAGANSLFSGDKLLTTPNAGEGKDQALFNKLGLTAEKPKPTVSDLSVDAMSA</sequence>
<protein>
    <recommendedName>
        <fullName evidence="1">Biotin synthase</fullName>
        <ecNumber evidence="1">2.8.1.6</ecNumber>
    </recommendedName>
</protein>
<proteinExistence type="inferred from homology"/>
<gene>
    <name evidence="1" type="primary">bioB</name>
    <name type="ordered locus">ABAYE2129</name>
</gene>
<comment type="function">
    <text evidence="1">Catalyzes the conversion of dethiobiotin (DTB) to biotin by the insertion of a sulfur atom into dethiobiotin via a radical-based mechanism.</text>
</comment>
<comment type="catalytic activity">
    <reaction evidence="1">
        <text>(4R,5S)-dethiobiotin + (sulfur carrier)-SH + 2 reduced [2Fe-2S]-[ferredoxin] + 2 S-adenosyl-L-methionine = (sulfur carrier)-H + biotin + 2 5'-deoxyadenosine + 2 L-methionine + 2 oxidized [2Fe-2S]-[ferredoxin]</text>
        <dbReference type="Rhea" id="RHEA:22060"/>
        <dbReference type="Rhea" id="RHEA-COMP:10000"/>
        <dbReference type="Rhea" id="RHEA-COMP:10001"/>
        <dbReference type="Rhea" id="RHEA-COMP:14737"/>
        <dbReference type="Rhea" id="RHEA-COMP:14739"/>
        <dbReference type="ChEBI" id="CHEBI:17319"/>
        <dbReference type="ChEBI" id="CHEBI:29917"/>
        <dbReference type="ChEBI" id="CHEBI:33737"/>
        <dbReference type="ChEBI" id="CHEBI:33738"/>
        <dbReference type="ChEBI" id="CHEBI:57586"/>
        <dbReference type="ChEBI" id="CHEBI:57844"/>
        <dbReference type="ChEBI" id="CHEBI:59789"/>
        <dbReference type="ChEBI" id="CHEBI:64428"/>
        <dbReference type="ChEBI" id="CHEBI:149473"/>
        <dbReference type="EC" id="2.8.1.6"/>
    </reaction>
</comment>
<comment type="cofactor">
    <cofactor evidence="1">
        <name>[4Fe-4S] cluster</name>
        <dbReference type="ChEBI" id="CHEBI:49883"/>
    </cofactor>
    <text evidence="1">Binds 1 [4Fe-4S] cluster. The cluster is coordinated with 3 cysteines and an exchangeable S-adenosyl-L-methionine.</text>
</comment>
<comment type="cofactor">
    <cofactor evidence="1">
        <name>[2Fe-2S] cluster</name>
        <dbReference type="ChEBI" id="CHEBI:190135"/>
    </cofactor>
    <text evidence="1">Binds 1 [2Fe-2S] cluster. The cluster is coordinated with 3 cysteines and 1 arginine.</text>
</comment>
<comment type="pathway">
    <text evidence="1">Cofactor biosynthesis; biotin biosynthesis; biotin from 7,8-diaminononanoate: step 2/2.</text>
</comment>
<comment type="subunit">
    <text evidence="1">Homodimer.</text>
</comment>
<comment type="similarity">
    <text evidence="1">Belongs to the radical SAM superfamily. Biotin synthase family.</text>
</comment>
<comment type="sequence caution" evidence="3">
    <conflict type="erroneous initiation">
        <sequence resource="EMBL-CDS" id="CAM87000"/>
    </conflict>
</comment>
<evidence type="ECO:0000255" key="1">
    <source>
        <dbReference type="HAMAP-Rule" id="MF_01694"/>
    </source>
</evidence>
<evidence type="ECO:0000255" key="2">
    <source>
        <dbReference type="PROSITE-ProRule" id="PRU01266"/>
    </source>
</evidence>
<evidence type="ECO:0000305" key="3"/>
<feature type="chain" id="PRO_0000381173" description="Biotin synthase">
    <location>
        <begin position="1"/>
        <end position="329"/>
    </location>
</feature>
<feature type="domain" description="Radical SAM core" evidence="2">
    <location>
        <begin position="38"/>
        <end position="262"/>
    </location>
</feature>
<feature type="binding site" evidence="1">
    <location>
        <position position="53"/>
    </location>
    <ligand>
        <name>[4Fe-4S] cluster</name>
        <dbReference type="ChEBI" id="CHEBI:49883"/>
        <note>4Fe-4S-S-AdoMet</note>
    </ligand>
</feature>
<feature type="binding site" evidence="1">
    <location>
        <position position="57"/>
    </location>
    <ligand>
        <name>[4Fe-4S] cluster</name>
        <dbReference type="ChEBI" id="CHEBI:49883"/>
        <note>4Fe-4S-S-AdoMet</note>
    </ligand>
</feature>
<feature type="binding site" evidence="1">
    <location>
        <position position="60"/>
    </location>
    <ligand>
        <name>[4Fe-4S] cluster</name>
        <dbReference type="ChEBI" id="CHEBI:49883"/>
        <note>4Fe-4S-S-AdoMet</note>
    </ligand>
</feature>
<feature type="binding site" evidence="1">
    <location>
        <position position="97"/>
    </location>
    <ligand>
        <name>[2Fe-2S] cluster</name>
        <dbReference type="ChEBI" id="CHEBI:190135"/>
    </ligand>
</feature>
<feature type="binding site" evidence="1">
    <location>
        <position position="128"/>
    </location>
    <ligand>
        <name>[2Fe-2S] cluster</name>
        <dbReference type="ChEBI" id="CHEBI:190135"/>
    </ligand>
</feature>
<feature type="binding site" evidence="1">
    <location>
        <position position="188"/>
    </location>
    <ligand>
        <name>[2Fe-2S] cluster</name>
        <dbReference type="ChEBI" id="CHEBI:190135"/>
    </ligand>
</feature>
<feature type="binding site" evidence="1">
    <location>
        <position position="260"/>
    </location>
    <ligand>
        <name>[2Fe-2S] cluster</name>
        <dbReference type="ChEBI" id="CHEBI:190135"/>
    </ligand>
</feature>
<keyword id="KW-0001">2Fe-2S</keyword>
<keyword id="KW-0004">4Fe-4S</keyword>
<keyword id="KW-0093">Biotin biosynthesis</keyword>
<keyword id="KW-0408">Iron</keyword>
<keyword id="KW-0411">Iron-sulfur</keyword>
<keyword id="KW-0479">Metal-binding</keyword>
<keyword id="KW-0949">S-adenosyl-L-methionine</keyword>
<keyword id="KW-0808">Transferase</keyword>
<organism>
    <name type="scientific">Acinetobacter baumannii (strain AYE)</name>
    <dbReference type="NCBI Taxonomy" id="509173"/>
    <lineage>
        <taxon>Bacteria</taxon>
        <taxon>Pseudomonadati</taxon>
        <taxon>Pseudomonadota</taxon>
        <taxon>Gammaproteobacteria</taxon>
        <taxon>Moraxellales</taxon>
        <taxon>Moraxellaceae</taxon>
        <taxon>Acinetobacter</taxon>
        <taxon>Acinetobacter calcoaceticus/baumannii complex</taxon>
    </lineage>
</organism>
<reference key="1">
    <citation type="journal article" date="2008" name="PLoS ONE">
        <title>Comparative analysis of Acinetobacters: three genomes for three lifestyles.</title>
        <authorList>
            <person name="Vallenet D."/>
            <person name="Nordmann P."/>
            <person name="Barbe V."/>
            <person name="Poirel L."/>
            <person name="Mangenot S."/>
            <person name="Bataille E."/>
            <person name="Dossat C."/>
            <person name="Gas S."/>
            <person name="Kreimeyer A."/>
            <person name="Lenoble P."/>
            <person name="Oztas S."/>
            <person name="Poulain J."/>
            <person name="Segurens B."/>
            <person name="Robert C."/>
            <person name="Abergel C."/>
            <person name="Claverie J.-M."/>
            <person name="Raoult D."/>
            <person name="Medigue C."/>
            <person name="Weissenbach J."/>
            <person name="Cruveiller S."/>
        </authorList>
    </citation>
    <scope>NUCLEOTIDE SEQUENCE [LARGE SCALE GENOMIC DNA]</scope>
    <source>
        <strain>AYE</strain>
    </source>
</reference>
<dbReference type="EC" id="2.8.1.6" evidence="1"/>
<dbReference type="EMBL" id="CU459141">
    <property type="protein sequence ID" value="CAM87000.1"/>
    <property type="status" value="ALT_INIT"/>
    <property type="molecule type" value="Genomic_DNA"/>
</dbReference>
<dbReference type="RefSeq" id="WP_000175360.1">
    <property type="nucleotide sequence ID" value="NZ_JBDGFB010000001.1"/>
</dbReference>
<dbReference type="SMR" id="B0VCA8"/>
<dbReference type="EnsemblBacteria" id="CAM87000">
    <property type="protein sequence ID" value="CAM87000"/>
    <property type="gene ID" value="ABAYE2129"/>
</dbReference>
<dbReference type="KEGG" id="aby:ABAYE2129"/>
<dbReference type="HOGENOM" id="CLU_033172_1_2_6"/>
<dbReference type="UniPathway" id="UPA00078">
    <property type="reaction ID" value="UER00162"/>
</dbReference>
<dbReference type="GO" id="GO:0051537">
    <property type="term" value="F:2 iron, 2 sulfur cluster binding"/>
    <property type="evidence" value="ECO:0007669"/>
    <property type="project" value="UniProtKB-KW"/>
</dbReference>
<dbReference type="GO" id="GO:0051539">
    <property type="term" value="F:4 iron, 4 sulfur cluster binding"/>
    <property type="evidence" value="ECO:0007669"/>
    <property type="project" value="UniProtKB-KW"/>
</dbReference>
<dbReference type="GO" id="GO:0004076">
    <property type="term" value="F:biotin synthase activity"/>
    <property type="evidence" value="ECO:0007669"/>
    <property type="project" value="UniProtKB-UniRule"/>
</dbReference>
<dbReference type="GO" id="GO:0005506">
    <property type="term" value="F:iron ion binding"/>
    <property type="evidence" value="ECO:0007669"/>
    <property type="project" value="UniProtKB-UniRule"/>
</dbReference>
<dbReference type="GO" id="GO:0009102">
    <property type="term" value="P:biotin biosynthetic process"/>
    <property type="evidence" value="ECO:0007669"/>
    <property type="project" value="UniProtKB-UniRule"/>
</dbReference>
<dbReference type="CDD" id="cd01335">
    <property type="entry name" value="Radical_SAM"/>
    <property type="match status" value="1"/>
</dbReference>
<dbReference type="FunFam" id="3.20.20.70:FF:000011">
    <property type="entry name" value="Biotin synthase"/>
    <property type="match status" value="1"/>
</dbReference>
<dbReference type="Gene3D" id="3.20.20.70">
    <property type="entry name" value="Aldolase class I"/>
    <property type="match status" value="1"/>
</dbReference>
<dbReference type="HAMAP" id="MF_01694">
    <property type="entry name" value="BioB"/>
    <property type="match status" value="1"/>
</dbReference>
<dbReference type="InterPro" id="IPR013785">
    <property type="entry name" value="Aldolase_TIM"/>
</dbReference>
<dbReference type="InterPro" id="IPR010722">
    <property type="entry name" value="BATS_dom"/>
</dbReference>
<dbReference type="InterPro" id="IPR002684">
    <property type="entry name" value="Biotin_synth/BioAB"/>
</dbReference>
<dbReference type="InterPro" id="IPR024177">
    <property type="entry name" value="Biotin_synthase"/>
</dbReference>
<dbReference type="InterPro" id="IPR006638">
    <property type="entry name" value="Elp3/MiaA/NifB-like_rSAM"/>
</dbReference>
<dbReference type="InterPro" id="IPR007197">
    <property type="entry name" value="rSAM"/>
</dbReference>
<dbReference type="NCBIfam" id="TIGR00433">
    <property type="entry name" value="bioB"/>
    <property type="match status" value="1"/>
</dbReference>
<dbReference type="PANTHER" id="PTHR22976">
    <property type="entry name" value="BIOTIN SYNTHASE"/>
    <property type="match status" value="1"/>
</dbReference>
<dbReference type="PANTHER" id="PTHR22976:SF2">
    <property type="entry name" value="BIOTIN SYNTHASE, MITOCHONDRIAL"/>
    <property type="match status" value="1"/>
</dbReference>
<dbReference type="Pfam" id="PF06968">
    <property type="entry name" value="BATS"/>
    <property type="match status" value="1"/>
</dbReference>
<dbReference type="Pfam" id="PF04055">
    <property type="entry name" value="Radical_SAM"/>
    <property type="match status" value="1"/>
</dbReference>
<dbReference type="PIRSF" id="PIRSF001619">
    <property type="entry name" value="Biotin_synth"/>
    <property type="match status" value="1"/>
</dbReference>
<dbReference type="SFLD" id="SFLDF00272">
    <property type="entry name" value="biotin_synthase"/>
    <property type="match status" value="1"/>
</dbReference>
<dbReference type="SFLD" id="SFLDS00029">
    <property type="entry name" value="Radical_SAM"/>
    <property type="match status" value="1"/>
</dbReference>
<dbReference type="SMART" id="SM00876">
    <property type="entry name" value="BATS"/>
    <property type="match status" value="1"/>
</dbReference>
<dbReference type="SMART" id="SM00729">
    <property type="entry name" value="Elp3"/>
    <property type="match status" value="1"/>
</dbReference>
<dbReference type="SUPFAM" id="SSF102114">
    <property type="entry name" value="Radical SAM enzymes"/>
    <property type="match status" value="1"/>
</dbReference>
<dbReference type="PROSITE" id="PS51918">
    <property type="entry name" value="RADICAL_SAM"/>
    <property type="match status" value="1"/>
</dbReference>
<accession>B0VCA8</accession>
<name>BIOB_ACIBY</name>